<proteinExistence type="inferred from homology"/>
<gene>
    <name type="primary">erh</name>
    <name type="ORF">DDB_G0274565</name>
</gene>
<keyword id="KW-0131">Cell cycle</keyword>
<keyword id="KW-1185">Reference proteome</keyword>
<reference key="1">
    <citation type="journal article" date="2002" name="Nature">
        <title>Sequence and analysis of chromosome 2 of Dictyostelium discoideum.</title>
        <authorList>
            <person name="Gloeckner G."/>
            <person name="Eichinger L."/>
            <person name="Szafranski K."/>
            <person name="Pachebat J.A."/>
            <person name="Bankier A.T."/>
            <person name="Dear P.H."/>
            <person name="Lehmann R."/>
            <person name="Baumgart C."/>
            <person name="Parra G."/>
            <person name="Abril J.F."/>
            <person name="Guigo R."/>
            <person name="Kumpf K."/>
            <person name="Tunggal B."/>
            <person name="Cox E.C."/>
            <person name="Quail M.A."/>
            <person name="Platzer M."/>
            <person name="Rosenthal A."/>
            <person name="Noegel A.A."/>
        </authorList>
    </citation>
    <scope>NUCLEOTIDE SEQUENCE [LARGE SCALE GENOMIC DNA]</scope>
    <source>
        <strain>AX4</strain>
    </source>
</reference>
<reference key="2">
    <citation type="journal article" date="2005" name="Nature">
        <title>The genome of the social amoeba Dictyostelium discoideum.</title>
        <authorList>
            <person name="Eichinger L."/>
            <person name="Pachebat J.A."/>
            <person name="Gloeckner G."/>
            <person name="Rajandream M.A."/>
            <person name="Sucgang R."/>
            <person name="Berriman M."/>
            <person name="Song J."/>
            <person name="Olsen R."/>
            <person name="Szafranski K."/>
            <person name="Xu Q."/>
            <person name="Tunggal B."/>
            <person name="Kummerfeld S."/>
            <person name="Madera M."/>
            <person name="Konfortov B.A."/>
            <person name="Rivero F."/>
            <person name="Bankier A.T."/>
            <person name="Lehmann R."/>
            <person name="Hamlin N."/>
            <person name="Davies R."/>
            <person name="Gaudet P."/>
            <person name="Fey P."/>
            <person name="Pilcher K."/>
            <person name="Chen G."/>
            <person name="Saunders D."/>
            <person name="Sodergren E.J."/>
            <person name="Davis P."/>
            <person name="Kerhornou A."/>
            <person name="Nie X."/>
            <person name="Hall N."/>
            <person name="Anjard C."/>
            <person name="Hemphill L."/>
            <person name="Bason N."/>
            <person name="Farbrother P."/>
            <person name="Desany B."/>
            <person name="Just E."/>
            <person name="Morio T."/>
            <person name="Rost R."/>
            <person name="Churcher C.M."/>
            <person name="Cooper J."/>
            <person name="Haydock S."/>
            <person name="van Driessche N."/>
            <person name="Cronin A."/>
            <person name="Goodhead I."/>
            <person name="Muzny D.M."/>
            <person name="Mourier T."/>
            <person name="Pain A."/>
            <person name="Lu M."/>
            <person name="Harper D."/>
            <person name="Lindsay R."/>
            <person name="Hauser H."/>
            <person name="James K.D."/>
            <person name="Quiles M."/>
            <person name="Madan Babu M."/>
            <person name="Saito T."/>
            <person name="Buchrieser C."/>
            <person name="Wardroper A."/>
            <person name="Felder M."/>
            <person name="Thangavelu M."/>
            <person name="Johnson D."/>
            <person name="Knights A."/>
            <person name="Loulseged H."/>
            <person name="Mungall K.L."/>
            <person name="Oliver K."/>
            <person name="Price C."/>
            <person name="Quail M.A."/>
            <person name="Urushihara H."/>
            <person name="Hernandez J."/>
            <person name="Rabbinowitsch E."/>
            <person name="Steffen D."/>
            <person name="Sanders M."/>
            <person name="Ma J."/>
            <person name="Kohara Y."/>
            <person name="Sharp S."/>
            <person name="Simmonds M.N."/>
            <person name="Spiegler S."/>
            <person name="Tivey A."/>
            <person name="Sugano S."/>
            <person name="White B."/>
            <person name="Walker D."/>
            <person name="Woodward J.R."/>
            <person name="Winckler T."/>
            <person name="Tanaka Y."/>
            <person name="Shaulsky G."/>
            <person name="Schleicher M."/>
            <person name="Weinstock G.M."/>
            <person name="Rosenthal A."/>
            <person name="Cox E.C."/>
            <person name="Chisholm R.L."/>
            <person name="Gibbs R.A."/>
            <person name="Loomis W.F."/>
            <person name="Platzer M."/>
            <person name="Kay R.R."/>
            <person name="Williams J.G."/>
            <person name="Dear P.H."/>
            <person name="Noegel A.A."/>
            <person name="Barrell B.G."/>
            <person name="Kuspa A."/>
        </authorList>
    </citation>
    <scope>NUCLEOTIDE SEQUENCE [LARGE SCALE GENOMIC DNA]</scope>
    <source>
        <strain>AX4</strain>
    </source>
</reference>
<evidence type="ECO:0000250" key="1"/>
<evidence type="ECO:0000305" key="2"/>
<dbReference type="EMBL" id="AAFI02000012">
    <property type="protein sequence ID" value="EAL70175.1"/>
    <property type="molecule type" value="Genomic_DNA"/>
</dbReference>
<dbReference type="RefSeq" id="XP_643968.1">
    <property type="nucleotide sequence ID" value="XM_638876.1"/>
</dbReference>
<dbReference type="SMR" id="Q86A92"/>
<dbReference type="FunCoup" id="Q86A92">
    <property type="interactions" value="560"/>
</dbReference>
<dbReference type="STRING" id="44689.Q86A92"/>
<dbReference type="PaxDb" id="44689-DDB0266558"/>
<dbReference type="EnsemblProtists" id="EAL70175">
    <property type="protein sequence ID" value="EAL70175"/>
    <property type="gene ID" value="DDB_G0274565"/>
</dbReference>
<dbReference type="GeneID" id="8619395"/>
<dbReference type="KEGG" id="ddi:DDB_G0274565"/>
<dbReference type="dictyBase" id="DDB_G0274565">
    <property type="gene designation" value="erh"/>
</dbReference>
<dbReference type="VEuPathDB" id="AmoebaDB:DDB_G0274565"/>
<dbReference type="eggNOG" id="KOG1766">
    <property type="taxonomic scope" value="Eukaryota"/>
</dbReference>
<dbReference type="HOGENOM" id="CLU_125703_1_0_1"/>
<dbReference type="InParanoid" id="Q86A92"/>
<dbReference type="OMA" id="ESRTWSD"/>
<dbReference type="PhylomeDB" id="Q86A92"/>
<dbReference type="PRO" id="PR:Q86A92"/>
<dbReference type="Proteomes" id="UP000002195">
    <property type="component" value="Chromosome 2"/>
</dbReference>
<dbReference type="Gene3D" id="3.30.2260.10">
    <property type="entry name" value="Enhancer of rudimentary"/>
    <property type="match status" value="1"/>
</dbReference>
<dbReference type="InterPro" id="IPR035912">
    <property type="entry name" value="EHR_sf"/>
</dbReference>
<dbReference type="InterPro" id="IPR000781">
    <property type="entry name" value="ERH"/>
</dbReference>
<dbReference type="PANTHER" id="PTHR12373">
    <property type="entry name" value="ENHANCER OF RUDIMENTARY ERH"/>
    <property type="match status" value="1"/>
</dbReference>
<dbReference type="PANTHER" id="PTHR12373:SF0">
    <property type="entry name" value="ENHANCER OF RUDIMENTARY HOMOLOG"/>
    <property type="match status" value="1"/>
</dbReference>
<dbReference type="Pfam" id="PF01133">
    <property type="entry name" value="ER"/>
    <property type="match status" value="1"/>
</dbReference>
<dbReference type="PIRSF" id="PIRSF016393">
    <property type="entry name" value="Enh_rudimentary"/>
    <property type="match status" value="1"/>
</dbReference>
<dbReference type="SUPFAM" id="SSF143875">
    <property type="entry name" value="ERH-like"/>
    <property type="match status" value="1"/>
</dbReference>
<dbReference type="PROSITE" id="PS01290">
    <property type="entry name" value="ER"/>
    <property type="match status" value="1"/>
</dbReference>
<organism>
    <name type="scientific">Dictyostelium discoideum</name>
    <name type="common">Social amoeba</name>
    <dbReference type="NCBI Taxonomy" id="44689"/>
    <lineage>
        <taxon>Eukaryota</taxon>
        <taxon>Amoebozoa</taxon>
        <taxon>Evosea</taxon>
        <taxon>Eumycetozoa</taxon>
        <taxon>Dictyostelia</taxon>
        <taxon>Dictyosteliales</taxon>
        <taxon>Dictyosteliaceae</taxon>
        <taxon>Dictyostelium</taxon>
    </lineage>
</organism>
<feature type="chain" id="PRO_0000328455" description="Enhancer of rudimentary homolog">
    <location>
        <begin position="1"/>
        <end position="100"/>
    </location>
</feature>
<protein>
    <recommendedName>
        <fullName>Enhancer of rudimentary homolog</fullName>
    </recommendedName>
</protein>
<comment type="function">
    <text evidence="1">May have a role in the cell cycle.</text>
</comment>
<comment type="subunit">
    <text evidence="1">Homodimer.</text>
</comment>
<comment type="similarity">
    <text evidence="2">Belongs to the E(R) family.</text>
</comment>
<sequence length="100" mass="11736">MSHTIVLLQTTMGKSSRTFMDYESVNQAIEGICNMYEQRLKQERPNQKNITYDISQLFKFIDSLADLSCLVYTSHINAYTPYNKEWIKTKIINHLQKLAQ</sequence>
<accession>Q86A92</accession>
<accession>Q555U2</accession>
<name>ERH_DICDI</name>